<comment type="function">
    <text evidence="1 3 4 15">Catalyzes the deamination of various vicinal amino-alcohols to oxo compounds (PubMed:19762342). Ethanolamine ammonia-lyase (EAL) allows bacteria to utilize ethanolamine as the sole source of nitrogen and carbon in the presence of external vitamin B12. It is spontaneously inactivated by its substrate and reactivated by EutA (PubMed:15466038). Directly targeted to the BMC. May play a role in bacterial microcompartment (BMC) assembly or maintenance (By similarity).</text>
</comment>
<comment type="catalytic activity">
    <reaction evidence="2 3 4">
        <text>ethanolamine = acetaldehyde + NH4(+)</text>
        <dbReference type="Rhea" id="RHEA:15313"/>
        <dbReference type="ChEBI" id="CHEBI:15343"/>
        <dbReference type="ChEBI" id="CHEBI:28938"/>
        <dbReference type="ChEBI" id="CHEBI:57603"/>
        <dbReference type="EC" id="4.3.1.7"/>
    </reaction>
</comment>
<comment type="cofactor">
    <cofactor evidence="2 4 5 6 7">
        <name>adenosylcob(III)alamin</name>
        <dbReference type="ChEBI" id="CHEBI:18408"/>
    </cofactor>
    <text evidence="2 5 6 7 13">Binds 1 AdoCbl between the large and small subunits, with 6 cofactors per holoenzyme.</text>
</comment>
<comment type="activity regulation">
    <text evidence="3 4 12">Inhibited by 5-adeninylpentylcobalamin (AdePeCbl), a cofactor analog (PubMed:19762342). Irreversibly inhibited during catalysis by cleavage of the Co-C bond of the cobalamin coenzyme (Probable) (PubMed:19762342). Reactivated by EutA, which probably involves an ATP-dependent cobalamin exchange (PubMed:15466038).</text>
</comment>
<comment type="biophysicochemical properties">
    <kinetics>
        <KM evidence="4">8.2 uM for ethanolamine</KM>
        <KM evidence="4">0.055 uM for adenosylcob(III)alamin</KM>
    </kinetics>
</comment>
<comment type="pathway">
    <text evidence="2">Amine and polyamine degradation; ethanolamine degradation.</text>
</comment>
<comment type="subunit">
    <text evidence="4 5 6 7 14">The basic unit is a heterodimer, which further associates into a trimer of heterotetramers (PubMed:19762342, PubMed:20519496, PubMed:21142024, PubMed:29797764). 6 large subunits form a core ring with 6 small subunits projecting outwards (Probable).</text>
</comment>
<comment type="subcellular location">
    <subcellularLocation>
        <location evidence="2">Bacterial microcompartment</location>
    </subcellularLocation>
</comment>
<comment type="induction">
    <text evidence="3">When grown in ethanolamine and adenosylcobalamin (AdoCbl) (at protein level). Note this experiment was done in strain JM109, which expresses the eut operon.</text>
</comment>
<comment type="domain">
    <text evidence="4">Partial trypsin digestion of this subunit (removing the first 28 residues) yields an active protein less susceptible to aggregation.</text>
</comment>
<comment type="similarity">
    <text evidence="2 11">Belongs to the EutC family.</text>
</comment>
<comment type="caution">
    <text evidence="16">In strain MG1655 the eut operon is interrupted by the CPZ-55 prophage, encoding 9 genes situated between eutA and eutB, which are translated in the other direction. CPZ-55 may prevent expression of the eut operon in strain MG1655. Strain W3110 does not have this prophage element and should be able to express the operon.</text>
</comment>
<sequence>MDQKQIEEIVRSVMASMGQAAPAPSEAKCATTNCAAPVTSESCALDLGSAEAKAWIGVENPHRADVLTELRRSTVARVCTGRAGPRPRTQALLRFLADHSRSKDTVLKEVPEEWVKAQGLLEVRSEISDKNLYLTRPDMGRRLCAEAVEALKAQCVANPDVQVVISDGLSTDAITVNYEEILPPLMAGLKQAGLKVGTPFFVRYGRVKIEDQIGEILGAKVVILLVGERPGLGQSESLSCYAVYSPRMATTVEADRTCISNIHQGGTPPVEAAAVIVDLAKRMLEQKASGINMTR</sequence>
<accession>P19636</accession>
<accession>P78273</accession>
<reference key="1">
    <citation type="journal article" date="1997" name="DNA Res.">
        <title>Construction of a contiguous 874-kb sequence of the Escherichia coli-K12 genome corresponding to 50.0-68.8 min on the linkage map and analysis of its sequence features.</title>
        <authorList>
            <person name="Yamamoto Y."/>
            <person name="Aiba H."/>
            <person name="Baba T."/>
            <person name="Hayashi K."/>
            <person name="Inada T."/>
            <person name="Isono K."/>
            <person name="Itoh T."/>
            <person name="Kimura S."/>
            <person name="Kitagawa M."/>
            <person name="Makino K."/>
            <person name="Miki T."/>
            <person name="Mitsuhashi N."/>
            <person name="Mizobuchi K."/>
            <person name="Mori H."/>
            <person name="Nakade S."/>
            <person name="Nakamura Y."/>
            <person name="Nashimoto H."/>
            <person name="Oshima T."/>
            <person name="Oyama S."/>
            <person name="Saito N."/>
            <person name="Sampei G."/>
            <person name="Satoh Y."/>
            <person name="Sivasundaram S."/>
            <person name="Tagami H."/>
            <person name="Takahashi H."/>
            <person name="Takeda J."/>
            <person name="Takemoto K."/>
            <person name="Uehara K."/>
            <person name="Wada C."/>
            <person name="Yamagata S."/>
            <person name="Horiuchi T."/>
        </authorList>
    </citation>
    <scope>NUCLEOTIDE SEQUENCE [LARGE SCALE GENOMIC DNA]</scope>
    <source>
        <strain>K12 / W3110 / ATCC 27325 / DSM 5911</strain>
    </source>
</reference>
<reference key="2">
    <citation type="journal article" date="1997" name="Science">
        <title>The complete genome sequence of Escherichia coli K-12.</title>
        <authorList>
            <person name="Blattner F.R."/>
            <person name="Plunkett G. III"/>
            <person name="Bloch C.A."/>
            <person name="Perna N.T."/>
            <person name="Burland V."/>
            <person name="Riley M."/>
            <person name="Collado-Vides J."/>
            <person name="Glasner J.D."/>
            <person name="Rode C.K."/>
            <person name="Mayhew G.F."/>
            <person name="Gregor J."/>
            <person name="Davis N.W."/>
            <person name="Kirkpatrick H.A."/>
            <person name="Goeden M.A."/>
            <person name="Rose D.J."/>
            <person name="Mau B."/>
            <person name="Shao Y."/>
        </authorList>
    </citation>
    <scope>NUCLEOTIDE SEQUENCE [LARGE SCALE GENOMIC DNA]</scope>
    <source>
        <strain>K12 / MG1655 / ATCC 47076</strain>
    </source>
</reference>
<reference key="3">
    <citation type="journal article" date="2006" name="Mol. Syst. Biol.">
        <title>Highly accurate genome sequences of Escherichia coli K-12 strains MG1655 and W3110.</title>
        <authorList>
            <person name="Hayashi K."/>
            <person name="Morooka N."/>
            <person name="Yamamoto Y."/>
            <person name="Fujita K."/>
            <person name="Isono K."/>
            <person name="Choi S."/>
            <person name="Ohtsubo E."/>
            <person name="Baba T."/>
            <person name="Wanner B.L."/>
            <person name="Mori H."/>
            <person name="Horiuchi T."/>
        </authorList>
    </citation>
    <scope>NUCLEOTIDE SEQUENCE [LARGE SCALE GENOMIC DNA]</scope>
    <source>
        <strain>K12 / W3110 / ATCC 27325 / DSM 5911</strain>
    </source>
</reference>
<reference key="4">
    <citation type="journal article" date="1990" name="J. Biol. Chem.">
        <title>Cloning, sequencing, and expression of the genes encoding the adenosylcobalamin-dependent ethanolamine ammonia-lyase of Salmonella typhimurium.</title>
        <authorList>
            <person name="Faust L.R.P."/>
            <person name="Connor J.A."/>
            <person name="Roof D.M."/>
            <person name="Hoch J.A."/>
            <person name="Babior B.M."/>
        </authorList>
    </citation>
    <scope>PROTEIN SEQUENCE OF 1-15</scope>
    <scope>FUNCTION</scope>
    <source>
        <strain>ATCC 9723</strain>
    </source>
</reference>
<reference key="5">
    <citation type="journal article" date="2010" name="J. Biochem.">
        <title>Purification and some properties of wild-type and N-terminal-truncated ethanolamine ammonia-lyase of Escherichia coli.</title>
        <authorList>
            <person name="Akita K."/>
            <person name="Hieda N."/>
            <person name="Baba N."/>
            <person name="Kawaguchi S."/>
            <person name="Sakamoto H."/>
            <person name="Nakanishi Y."/>
            <person name="Yamanishi M."/>
            <person name="Mori K."/>
            <person name="Toraya T."/>
        </authorList>
    </citation>
    <scope>PROTEIN SEQUENCE OF 1-6 AND 29-34</scope>
    <scope>FUNCTION</scope>
    <scope>CATALYTIC ACTIVITY</scope>
    <scope>COFACTOR</scope>
    <scope>ACTIVITY REGULATION</scope>
    <scope>BIOPHYSICOCHEMICAL PROPERTIES</scope>
    <scope>SUBUNIT</scope>
    <scope>DOMAIN</scope>
    <source>
        <strain>K12 / W3110 / ATCC 27325 / DSM 5911</strain>
    </source>
</reference>
<reference key="6">
    <citation type="journal article" date="2004" name="J. Bacteriol.">
        <title>Identification of a reactivating factor for adenosylcobalamin-dependent ethanolamine ammonia lyase.</title>
        <authorList>
            <person name="Mori K."/>
            <person name="Bando R."/>
            <person name="Hieda N."/>
            <person name="Toraya T."/>
        </authorList>
    </citation>
    <scope>FUNCTION</scope>
    <scope>CATALYTIC ACTIVITY</scope>
    <scope>ACTIVITY REGULATION</scope>
    <scope>INDUCTION</scope>
    <source>
        <strain>K12 / JM109 / ATCC 53323</strain>
        <strain>K12 / W3110 / ATCC 27325 / DSM 5911</strain>
    </source>
</reference>
<reference evidence="17 18 19 20" key="7">
    <citation type="journal article" date="2010" name="J. Biol. Chem.">
        <title>Crystal structures of ethanolamine ammonia-lyase complexed with coenzyme B12 analogs and substrates.</title>
        <authorList>
            <person name="Shibata N."/>
            <person name="Tamagaki H."/>
            <person name="Hieda N."/>
            <person name="Akita K."/>
            <person name="Komori H."/>
            <person name="Shomura Y."/>
            <person name="Terawaki S."/>
            <person name="Mori K."/>
            <person name="Yasuoka N."/>
            <person name="Higuchi Y."/>
            <person name="Toraya T."/>
        </authorList>
    </citation>
    <scope>X-RAY CRYSTALLOGRAPHY (2.05 ANGSTROMS) OF 44-295 IN COMPLEX WITH COFACTORS</scope>
    <scope>COFACTOR</scope>
    <scope>SUBUNIT</scope>
</reference>
<reference evidence="21 22" key="8">
    <citation type="journal article" date="2011" name="Biochemistry">
        <title>How coenzyme B12-dependent ethanolamine ammonia-lyase deals with both enantiomers of 2-amino-1-propanol as substrates: structure-based rationalization.</title>
        <authorList>
            <person name="Shibata N."/>
            <person name="Higuchi Y."/>
            <person name="Toraya T."/>
        </authorList>
    </citation>
    <scope>X-RAY CRYSTALLOGRAPHY (2.10 ANGSTROMS) OF 44-295 IN COMPLEX WITH COFACTOR</scope>
    <scope>COFACTOR</scope>
    <scope>SUBUNIT</scope>
</reference>
<reference evidence="23 24" key="9">
    <citation type="journal article" date="2018" name="Angew. Chem. Int. Ed. Engl.">
        <title>Direct Participation of a Peripheral Side Chain of a Corrin Ring in CoenzymeB12 Catalysis.</title>
        <authorList>
            <person name="Shibata N."/>
            <person name="Sueyoshi Y."/>
            <person name="Higuchi Y."/>
            <person name="Toraya T."/>
        </authorList>
    </citation>
    <scope>X-RAY CRYSTALLOGRAPHY (2.00 ANGSTROMS) OF 44-295 IN COMPLEX WITH ADENOSYLCOBALAMIN</scope>
    <scope>REACTION MECHANISM</scope>
    <scope>COFACTOR</scope>
    <scope>SUBUNIT</scope>
</reference>
<protein>
    <recommendedName>
        <fullName evidence="2 10">Ethanolamine ammonia-lyase small subunit</fullName>
        <shortName evidence="2 8">EAL small subunit</shortName>
        <ecNumber evidence="2 3 4">4.3.1.7</ecNumber>
    </recommendedName>
    <alternativeName>
        <fullName evidence="9">Ethanolamine ammonia-lyase beta subunit</fullName>
    </alternativeName>
    <alternativeName>
        <fullName>Ethanolamine ammonia-lyase light chain</fullName>
    </alternativeName>
    <alternativeName>
        <fullName evidence="9">Ethanolamine deaminase small subunit</fullName>
    </alternativeName>
</protein>
<gene>
    <name evidence="2" type="primary">eutC</name>
    <name type="ordered locus">b2440</name>
    <name type="ordered locus">JW2433</name>
</gene>
<feature type="chain" id="PRO_0000205988" description="Ethanolamine ammonia-lyase small subunit">
    <location>
        <begin position="1"/>
        <end position="295"/>
    </location>
</feature>
<feature type="binding site" evidence="2 5 6 17 18 19 23 24">
    <location>
        <position position="207"/>
    </location>
    <ligand>
        <name>adenosylcob(III)alamin</name>
        <dbReference type="ChEBI" id="CHEBI:18408"/>
    </ligand>
</feature>
<feature type="binding site" evidence="2 5 6 17 18 19 21 22">
    <location>
        <position position="228"/>
    </location>
    <ligand>
        <name>adenosylcob(III)alamin</name>
        <dbReference type="ChEBI" id="CHEBI:18408"/>
    </ligand>
</feature>
<feature type="binding site" evidence="2 5 6 17 19 22 23">
    <location>
        <position position="258"/>
    </location>
    <ligand>
        <name>adenosylcob(III)alamin</name>
        <dbReference type="ChEBI" id="CHEBI:18408"/>
    </ligand>
</feature>
<feature type="helix" evidence="25">
    <location>
        <begin position="50"/>
        <end position="54"/>
    </location>
</feature>
<feature type="helix" evidence="25">
    <location>
        <begin position="64"/>
        <end position="73"/>
    </location>
</feature>
<feature type="helix" evidence="25">
    <location>
        <begin position="89"/>
        <end position="107"/>
    </location>
</feature>
<feature type="helix" evidence="25">
    <location>
        <begin position="112"/>
        <end position="117"/>
    </location>
</feature>
<feature type="strand" evidence="25">
    <location>
        <begin position="121"/>
        <end position="126"/>
    </location>
</feature>
<feature type="helix" evidence="25">
    <location>
        <begin position="130"/>
        <end position="135"/>
    </location>
</feature>
<feature type="helix" evidence="25">
    <location>
        <begin position="137"/>
        <end position="140"/>
    </location>
</feature>
<feature type="strand" evidence="26">
    <location>
        <begin position="141"/>
        <end position="143"/>
    </location>
</feature>
<feature type="helix" evidence="25">
    <location>
        <begin position="145"/>
        <end position="154"/>
    </location>
</feature>
<feature type="strand" evidence="25">
    <location>
        <begin position="160"/>
        <end position="168"/>
    </location>
</feature>
<feature type="helix" evidence="25">
    <location>
        <begin position="171"/>
        <end position="190"/>
    </location>
</feature>
<feature type="turn" evidence="25">
    <location>
        <begin position="191"/>
        <end position="193"/>
    </location>
</feature>
<feature type="strand" evidence="25">
    <location>
        <begin position="200"/>
        <end position="203"/>
    </location>
</feature>
<feature type="helix" evidence="25">
    <location>
        <begin position="209"/>
        <end position="217"/>
    </location>
</feature>
<feature type="strand" evidence="25">
    <location>
        <begin position="220"/>
        <end position="227"/>
    </location>
</feature>
<feature type="strand" evidence="25">
    <location>
        <begin position="238"/>
        <end position="245"/>
    </location>
</feature>
<feature type="turn" evidence="25">
    <location>
        <begin position="248"/>
        <end position="250"/>
    </location>
</feature>
<feature type="helix" evidence="25">
    <location>
        <begin position="253"/>
        <end position="255"/>
    </location>
</feature>
<feature type="strand" evidence="25">
    <location>
        <begin position="256"/>
        <end position="263"/>
    </location>
</feature>
<feature type="helix" evidence="25">
    <location>
        <begin position="269"/>
        <end position="286"/>
    </location>
</feature>
<feature type="helix" evidence="25">
    <location>
        <begin position="290"/>
        <end position="292"/>
    </location>
</feature>
<evidence type="ECO:0000250" key="1">
    <source>
        <dbReference type="UniProtKB" id="P19265"/>
    </source>
</evidence>
<evidence type="ECO:0000255" key="2">
    <source>
        <dbReference type="HAMAP-Rule" id="MF_00601"/>
    </source>
</evidence>
<evidence type="ECO:0000269" key="3">
    <source>
    </source>
</evidence>
<evidence type="ECO:0000269" key="4">
    <source>
    </source>
</evidence>
<evidence type="ECO:0000269" key="5">
    <source>
    </source>
</evidence>
<evidence type="ECO:0000269" key="6">
    <source>
    </source>
</evidence>
<evidence type="ECO:0000269" key="7">
    <source>
    </source>
</evidence>
<evidence type="ECO:0000303" key="8">
    <source>
    </source>
</evidence>
<evidence type="ECO:0000303" key="9">
    <source>
    </source>
</evidence>
<evidence type="ECO:0000303" key="10">
    <source>
    </source>
</evidence>
<evidence type="ECO:0000305" key="11"/>
<evidence type="ECO:0000305" key="12">
    <source>
    </source>
</evidence>
<evidence type="ECO:0000305" key="13">
    <source>
    </source>
</evidence>
<evidence type="ECO:0000305" key="14">
    <source>
    </source>
</evidence>
<evidence type="ECO:0000305" key="15">
    <source>
    </source>
</evidence>
<evidence type="ECO:0000305" key="16">
    <source>
    </source>
</evidence>
<evidence type="ECO:0007744" key="17">
    <source>
        <dbReference type="PDB" id="3ABO"/>
    </source>
</evidence>
<evidence type="ECO:0007744" key="18">
    <source>
        <dbReference type="PDB" id="3ABQ"/>
    </source>
</evidence>
<evidence type="ECO:0007744" key="19">
    <source>
        <dbReference type="PDB" id="3ABR"/>
    </source>
</evidence>
<evidence type="ECO:0007744" key="20">
    <source>
        <dbReference type="PDB" id="3ABS"/>
    </source>
</evidence>
<evidence type="ECO:0007744" key="21">
    <source>
        <dbReference type="PDB" id="3ANY"/>
    </source>
</evidence>
<evidence type="ECO:0007744" key="22">
    <source>
        <dbReference type="PDB" id="3AO0"/>
    </source>
</evidence>
<evidence type="ECO:0007744" key="23">
    <source>
        <dbReference type="PDB" id="5YSN"/>
    </source>
</evidence>
<evidence type="ECO:0007744" key="24">
    <source>
        <dbReference type="PDB" id="5YSR"/>
    </source>
</evidence>
<evidence type="ECO:0007829" key="25">
    <source>
        <dbReference type="PDB" id="5YSN"/>
    </source>
</evidence>
<evidence type="ECO:0007829" key="26">
    <source>
        <dbReference type="PDB" id="5YSR"/>
    </source>
</evidence>
<name>EUTC_ECOLI</name>
<keyword id="KW-0002">3D-structure</keyword>
<keyword id="KW-1283">Bacterial microcompartment</keyword>
<keyword id="KW-0846">Cobalamin</keyword>
<keyword id="KW-0170">Cobalt</keyword>
<keyword id="KW-0903">Direct protein sequencing</keyword>
<keyword id="KW-0456">Lyase</keyword>
<keyword id="KW-1185">Reference proteome</keyword>
<proteinExistence type="evidence at protein level"/>
<dbReference type="EC" id="4.3.1.7" evidence="2 3 4"/>
<dbReference type="EMBL" id="U00096">
    <property type="protein sequence ID" value="AAC75493.1"/>
    <property type="molecule type" value="Genomic_DNA"/>
</dbReference>
<dbReference type="EMBL" id="AP009048">
    <property type="protein sequence ID" value="BAA16322.1"/>
    <property type="molecule type" value="Genomic_DNA"/>
</dbReference>
<dbReference type="PIR" id="G65018">
    <property type="entry name" value="G65018"/>
</dbReference>
<dbReference type="RefSeq" id="NP_416935.1">
    <property type="nucleotide sequence ID" value="NC_000913.3"/>
</dbReference>
<dbReference type="RefSeq" id="WP_000372316.1">
    <property type="nucleotide sequence ID" value="NZ_LN832404.1"/>
</dbReference>
<dbReference type="PDB" id="3ABO">
    <property type="method" value="X-ray"/>
    <property type="resolution" value="2.10 A"/>
    <property type="chains" value="B/D=44-295"/>
</dbReference>
<dbReference type="PDB" id="3ABQ">
    <property type="method" value="X-ray"/>
    <property type="resolution" value="2.05 A"/>
    <property type="chains" value="B/D=44-295"/>
</dbReference>
<dbReference type="PDB" id="3ABR">
    <property type="method" value="X-ray"/>
    <property type="resolution" value="2.10 A"/>
    <property type="chains" value="B/D=44-295"/>
</dbReference>
<dbReference type="PDB" id="3ABS">
    <property type="method" value="X-ray"/>
    <property type="resolution" value="2.25 A"/>
    <property type="chains" value="B/D=44-295"/>
</dbReference>
<dbReference type="PDB" id="3ANY">
    <property type="method" value="X-ray"/>
    <property type="resolution" value="2.10 A"/>
    <property type="chains" value="B/D=44-295"/>
</dbReference>
<dbReference type="PDB" id="3AO0">
    <property type="method" value="X-ray"/>
    <property type="resolution" value="2.25 A"/>
    <property type="chains" value="B/D=44-295"/>
</dbReference>
<dbReference type="PDB" id="5YSN">
    <property type="method" value="X-ray"/>
    <property type="resolution" value="2.00 A"/>
    <property type="chains" value="B/D=44-295"/>
</dbReference>
<dbReference type="PDB" id="5YSR">
    <property type="method" value="X-ray"/>
    <property type="resolution" value="2.05 A"/>
    <property type="chains" value="B/D=44-295"/>
</dbReference>
<dbReference type="PDB" id="7XRM">
    <property type="method" value="X-ray"/>
    <property type="resolution" value="2.13 A"/>
    <property type="chains" value="B/D=44-295"/>
</dbReference>
<dbReference type="PDB" id="7XRN">
    <property type="method" value="X-ray"/>
    <property type="resolution" value="2.07 A"/>
    <property type="chains" value="B/D=44-295"/>
</dbReference>
<dbReference type="PDBsum" id="3ABO"/>
<dbReference type="PDBsum" id="3ABQ"/>
<dbReference type="PDBsum" id="3ABR"/>
<dbReference type="PDBsum" id="3ABS"/>
<dbReference type="PDBsum" id="3ANY"/>
<dbReference type="PDBsum" id="3AO0"/>
<dbReference type="PDBsum" id="5YSN"/>
<dbReference type="PDBsum" id="5YSR"/>
<dbReference type="PDBsum" id="7XRM"/>
<dbReference type="PDBsum" id="7XRN"/>
<dbReference type="SMR" id="P19636"/>
<dbReference type="BioGRID" id="4260577">
    <property type="interactions" value="21"/>
</dbReference>
<dbReference type="BioGRID" id="851264">
    <property type="interactions" value="23"/>
</dbReference>
<dbReference type="ComplexPortal" id="CPX-2313">
    <property type="entry name" value="Ethanolamine ammonia-lyase complex"/>
</dbReference>
<dbReference type="FunCoup" id="P19636">
    <property type="interactions" value="65"/>
</dbReference>
<dbReference type="IntAct" id="P19636">
    <property type="interactions" value="30"/>
</dbReference>
<dbReference type="STRING" id="511145.b2440"/>
<dbReference type="jPOST" id="P19636"/>
<dbReference type="PaxDb" id="511145-b2440"/>
<dbReference type="EnsemblBacteria" id="AAC75493">
    <property type="protein sequence ID" value="AAC75493"/>
    <property type="gene ID" value="b2440"/>
</dbReference>
<dbReference type="GeneID" id="946925"/>
<dbReference type="KEGG" id="ecj:JW2433"/>
<dbReference type="KEGG" id="eco:b2440"/>
<dbReference type="KEGG" id="ecoc:C3026_13550"/>
<dbReference type="PATRIC" id="fig|1411691.4.peg.4291"/>
<dbReference type="EchoBASE" id="EB4300"/>
<dbReference type="eggNOG" id="COG4302">
    <property type="taxonomic scope" value="Bacteria"/>
</dbReference>
<dbReference type="HOGENOM" id="CLU_068224_0_0_6"/>
<dbReference type="InParanoid" id="P19636"/>
<dbReference type="OMA" id="FQFAHAQ"/>
<dbReference type="OrthoDB" id="114248at2"/>
<dbReference type="PhylomeDB" id="P19636"/>
<dbReference type="BioCyc" id="EcoCyc:EUTC-MONOMER"/>
<dbReference type="BioCyc" id="MetaCyc:EUTC-MONOMER"/>
<dbReference type="BRENDA" id="4.3.1.7">
    <property type="organism ID" value="2026"/>
</dbReference>
<dbReference type="UniPathway" id="UPA00560"/>
<dbReference type="EvolutionaryTrace" id="P19636"/>
<dbReference type="PRO" id="PR:P19636"/>
<dbReference type="Proteomes" id="UP000000625">
    <property type="component" value="Chromosome"/>
</dbReference>
<dbReference type="GO" id="GO:0009350">
    <property type="term" value="C:ethanolamine ammonia-lyase complex"/>
    <property type="evidence" value="ECO:0000314"/>
    <property type="project" value="EcoCyc"/>
</dbReference>
<dbReference type="GO" id="GO:0031471">
    <property type="term" value="C:ethanolamine degradation polyhedral organelle"/>
    <property type="evidence" value="ECO:0007669"/>
    <property type="project" value="UniProtKB-UniRule"/>
</dbReference>
<dbReference type="GO" id="GO:0031419">
    <property type="term" value="F:cobalamin binding"/>
    <property type="evidence" value="ECO:0007669"/>
    <property type="project" value="UniProtKB-UniRule"/>
</dbReference>
<dbReference type="GO" id="GO:0008851">
    <property type="term" value="F:ethanolamine ammonia-lyase activity"/>
    <property type="evidence" value="ECO:0007669"/>
    <property type="project" value="UniProtKB-UniRule"/>
</dbReference>
<dbReference type="GO" id="GO:0006520">
    <property type="term" value="P:amino acid metabolic process"/>
    <property type="evidence" value="ECO:0007669"/>
    <property type="project" value="InterPro"/>
</dbReference>
<dbReference type="GO" id="GO:0046336">
    <property type="term" value="P:ethanolamine catabolic process"/>
    <property type="evidence" value="ECO:0000314"/>
    <property type="project" value="ComplexPortal"/>
</dbReference>
<dbReference type="FunFam" id="3.40.50.11240:FF:000001">
    <property type="entry name" value="Ethanolamine ammonia-lyase light chain"/>
    <property type="match status" value="1"/>
</dbReference>
<dbReference type="Gene3D" id="6.10.140.690">
    <property type="match status" value="1"/>
</dbReference>
<dbReference type="Gene3D" id="6.10.250.2060">
    <property type="match status" value="1"/>
</dbReference>
<dbReference type="Gene3D" id="3.40.50.11240">
    <property type="entry name" value="Ethanolamine ammonia-lyase light chain (EutC)"/>
    <property type="match status" value="1"/>
</dbReference>
<dbReference type="HAMAP" id="MF_00601">
    <property type="entry name" value="EutC"/>
    <property type="match status" value="1"/>
</dbReference>
<dbReference type="InterPro" id="IPR009246">
    <property type="entry name" value="EutC"/>
</dbReference>
<dbReference type="InterPro" id="IPR042251">
    <property type="entry name" value="EutC_C"/>
</dbReference>
<dbReference type="NCBIfam" id="NF003971">
    <property type="entry name" value="PRK05465.1"/>
    <property type="match status" value="1"/>
</dbReference>
<dbReference type="PANTHER" id="PTHR39330">
    <property type="entry name" value="ETHANOLAMINE AMMONIA-LYASE LIGHT CHAIN"/>
    <property type="match status" value="1"/>
</dbReference>
<dbReference type="PANTHER" id="PTHR39330:SF1">
    <property type="entry name" value="ETHANOLAMINE AMMONIA-LYASE SMALL SUBUNIT"/>
    <property type="match status" value="1"/>
</dbReference>
<dbReference type="Pfam" id="PF05985">
    <property type="entry name" value="EutC"/>
    <property type="match status" value="1"/>
</dbReference>
<dbReference type="PIRSF" id="PIRSF018982">
    <property type="entry name" value="EutC"/>
    <property type="match status" value="1"/>
</dbReference>
<organism>
    <name type="scientific">Escherichia coli (strain K12)</name>
    <dbReference type="NCBI Taxonomy" id="83333"/>
    <lineage>
        <taxon>Bacteria</taxon>
        <taxon>Pseudomonadati</taxon>
        <taxon>Pseudomonadota</taxon>
        <taxon>Gammaproteobacteria</taxon>
        <taxon>Enterobacterales</taxon>
        <taxon>Enterobacteriaceae</taxon>
        <taxon>Escherichia</taxon>
    </lineage>
</organism>